<evidence type="ECO:0000255" key="1">
    <source>
        <dbReference type="HAMAP-Rule" id="MF_03116"/>
    </source>
</evidence>
<protein>
    <recommendedName>
        <fullName evidence="1">Methylthioribulose-1-phosphate dehydratase</fullName>
        <shortName evidence="1">MTRu-1-P dehydratase</shortName>
        <ecNumber evidence="1">4.2.1.109</ecNumber>
    </recommendedName>
</protein>
<dbReference type="EC" id="4.2.1.109" evidence="1"/>
<dbReference type="EMBL" id="DS547094">
    <property type="protein sequence ID" value="EDR12993.1"/>
    <property type="molecule type" value="Genomic_DNA"/>
</dbReference>
<dbReference type="RefSeq" id="XP_001877257.1">
    <property type="nucleotide sequence ID" value="XM_001877222.1"/>
</dbReference>
<dbReference type="SMR" id="B0CZ32"/>
<dbReference type="FunCoup" id="B0CZ32">
    <property type="interactions" value="291"/>
</dbReference>
<dbReference type="STRING" id="486041.B0CZ32"/>
<dbReference type="GeneID" id="6072245"/>
<dbReference type="KEGG" id="lbc:LACBIDRAFT_312101"/>
<dbReference type="HOGENOM" id="CLU_006033_4_0_1"/>
<dbReference type="InParanoid" id="B0CZ32"/>
<dbReference type="OrthoDB" id="191080at2759"/>
<dbReference type="UniPathway" id="UPA00904">
    <property type="reaction ID" value="UER00875"/>
</dbReference>
<dbReference type="Proteomes" id="UP000001194">
    <property type="component" value="Unassembled WGS sequence"/>
</dbReference>
<dbReference type="GO" id="GO:0005737">
    <property type="term" value="C:cytoplasm"/>
    <property type="evidence" value="ECO:0007669"/>
    <property type="project" value="UniProtKB-SubCell"/>
</dbReference>
<dbReference type="GO" id="GO:0046570">
    <property type="term" value="F:methylthioribulose 1-phosphate dehydratase activity"/>
    <property type="evidence" value="ECO:0007669"/>
    <property type="project" value="UniProtKB-UniRule"/>
</dbReference>
<dbReference type="GO" id="GO:0008270">
    <property type="term" value="F:zinc ion binding"/>
    <property type="evidence" value="ECO:0007669"/>
    <property type="project" value="UniProtKB-UniRule"/>
</dbReference>
<dbReference type="GO" id="GO:0019509">
    <property type="term" value="P:L-methionine salvage from methylthioadenosine"/>
    <property type="evidence" value="ECO:0007669"/>
    <property type="project" value="UniProtKB-UniRule"/>
</dbReference>
<dbReference type="FunFam" id="3.40.225.10:FF:000003">
    <property type="entry name" value="Methylthioribulose-1-phosphate dehydratase"/>
    <property type="match status" value="1"/>
</dbReference>
<dbReference type="Gene3D" id="3.40.225.10">
    <property type="entry name" value="Class II aldolase/adducin N-terminal domain"/>
    <property type="match status" value="1"/>
</dbReference>
<dbReference type="HAMAP" id="MF_03116">
    <property type="entry name" value="Salvage_MtnB_euk"/>
    <property type="match status" value="1"/>
</dbReference>
<dbReference type="InterPro" id="IPR001303">
    <property type="entry name" value="Aldolase_II/adducin_N"/>
</dbReference>
<dbReference type="InterPro" id="IPR036409">
    <property type="entry name" value="Aldolase_II/adducin_N_sf"/>
</dbReference>
<dbReference type="InterPro" id="IPR017714">
    <property type="entry name" value="MethylthioRu-1-P_deHdtase_MtnB"/>
</dbReference>
<dbReference type="InterPro" id="IPR027514">
    <property type="entry name" value="Salvage_MtnB_euk"/>
</dbReference>
<dbReference type="NCBIfam" id="TIGR03328">
    <property type="entry name" value="salvage_mtnB"/>
    <property type="match status" value="1"/>
</dbReference>
<dbReference type="PANTHER" id="PTHR10640">
    <property type="entry name" value="METHYLTHIORIBULOSE-1-PHOSPHATE DEHYDRATASE"/>
    <property type="match status" value="1"/>
</dbReference>
<dbReference type="PANTHER" id="PTHR10640:SF7">
    <property type="entry name" value="METHYLTHIORIBULOSE-1-PHOSPHATE DEHYDRATASE"/>
    <property type="match status" value="1"/>
</dbReference>
<dbReference type="Pfam" id="PF00596">
    <property type="entry name" value="Aldolase_II"/>
    <property type="match status" value="1"/>
</dbReference>
<dbReference type="SMART" id="SM01007">
    <property type="entry name" value="Aldolase_II"/>
    <property type="match status" value="1"/>
</dbReference>
<dbReference type="SUPFAM" id="SSF53639">
    <property type="entry name" value="AraD/HMP-PK domain-like"/>
    <property type="match status" value="1"/>
</dbReference>
<organism>
    <name type="scientific">Laccaria bicolor (strain S238N-H82 / ATCC MYA-4686)</name>
    <name type="common">Bicoloured deceiver</name>
    <name type="synonym">Laccaria laccata var. bicolor</name>
    <dbReference type="NCBI Taxonomy" id="486041"/>
    <lineage>
        <taxon>Eukaryota</taxon>
        <taxon>Fungi</taxon>
        <taxon>Dikarya</taxon>
        <taxon>Basidiomycota</taxon>
        <taxon>Agaricomycotina</taxon>
        <taxon>Agaricomycetes</taxon>
        <taxon>Agaricomycetidae</taxon>
        <taxon>Agaricales</taxon>
        <taxon>Agaricineae</taxon>
        <taxon>Hydnangiaceae</taxon>
        <taxon>Laccaria</taxon>
    </lineage>
</organism>
<gene>
    <name evidence="1" type="primary">MDE1</name>
    <name type="ORF">LACBIDRAFT_312101</name>
</gene>
<feature type="chain" id="PRO_0000393826" description="Methylthioribulose-1-phosphate dehydratase">
    <location>
        <begin position="1"/>
        <end position="237"/>
    </location>
</feature>
<feature type="active site" description="Proton donor/acceptor" evidence="1">
    <location>
        <position position="140"/>
    </location>
</feature>
<feature type="binding site" evidence="1">
    <location>
        <position position="98"/>
    </location>
    <ligand>
        <name>substrate</name>
    </ligand>
</feature>
<feature type="binding site" evidence="1">
    <location>
        <position position="116"/>
    </location>
    <ligand>
        <name>Zn(2+)</name>
        <dbReference type="ChEBI" id="CHEBI:29105"/>
    </ligand>
</feature>
<feature type="binding site" evidence="1">
    <location>
        <position position="118"/>
    </location>
    <ligand>
        <name>Zn(2+)</name>
        <dbReference type="ChEBI" id="CHEBI:29105"/>
    </ligand>
</feature>
<feature type="binding site" evidence="1">
    <location>
        <position position="196"/>
    </location>
    <ligand>
        <name>Zn(2+)</name>
        <dbReference type="ChEBI" id="CHEBI:29105"/>
    </ligand>
</feature>
<name>MTNB_LACBS</name>
<proteinExistence type="inferred from homology"/>
<sequence>MASQDADALVTSSDPLHPANLIPELCRSFYQLGWVTGTGGGICIRTGDKVFIAPSGVQKERIESTHIFVLPYPQAAPSPHTDRAFLRRPAMNLKESACTPLFWNSFDLRNAGSCIHTHSQHAVMATLLWPGPVFTISHQEMIKGVRVGGTGAALSYLDTLELPIIENTPNEEDLKDSMAEAMLKYPDAAGVLVRRHGVYVWGNDWEKAKTQTECLDYLFEMGVRMKLAGLPTVLNEA</sequence>
<reference key="1">
    <citation type="journal article" date="2008" name="Nature">
        <title>The genome of Laccaria bicolor provides insights into mycorrhizal symbiosis.</title>
        <authorList>
            <person name="Martin F."/>
            <person name="Aerts A."/>
            <person name="Ahren D."/>
            <person name="Brun A."/>
            <person name="Danchin E.G.J."/>
            <person name="Duchaussoy F."/>
            <person name="Gibon J."/>
            <person name="Kohler A."/>
            <person name="Lindquist E."/>
            <person name="Pereda V."/>
            <person name="Salamov A."/>
            <person name="Shapiro H.J."/>
            <person name="Wuyts J."/>
            <person name="Blaudez D."/>
            <person name="Buee M."/>
            <person name="Brokstein P."/>
            <person name="Canbaeck B."/>
            <person name="Cohen D."/>
            <person name="Courty P.E."/>
            <person name="Coutinho P.M."/>
            <person name="Delaruelle C."/>
            <person name="Detter J.C."/>
            <person name="Deveau A."/>
            <person name="DiFazio S."/>
            <person name="Duplessis S."/>
            <person name="Fraissinet-Tachet L."/>
            <person name="Lucic E."/>
            <person name="Frey-Klett P."/>
            <person name="Fourrey C."/>
            <person name="Feussner I."/>
            <person name="Gay G."/>
            <person name="Grimwood J."/>
            <person name="Hoegger P.J."/>
            <person name="Jain P."/>
            <person name="Kilaru S."/>
            <person name="Labbe J."/>
            <person name="Lin Y.C."/>
            <person name="Legue V."/>
            <person name="Le Tacon F."/>
            <person name="Marmeisse R."/>
            <person name="Melayah D."/>
            <person name="Montanini B."/>
            <person name="Muratet M."/>
            <person name="Nehls U."/>
            <person name="Niculita-Hirzel H."/>
            <person name="Oudot-Le Secq M.P."/>
            <person name="Peter M."/>
            <person name="Quesneville H."/>
            <person name="Rajashekar B."/>
            <person name="Reich M."/>
            <person name="Rouhier N."/>
            <person name="Schmutz J."/>
            <person name="Yin T."/>
            <person name="Chalot M."/>
            <person name="Henrissat B."/>
            <person name="Kuees U."/>
            <person name="Lucas S."/>
            <person name="Van de Peer Y."/>
            <person name="Podila G.K."/>
            <person name="Polle A."/>
            <person name="Pukkila P.J."/>
            <person name="Richardson P.M."/>
            <person name="Rouze P."/>
            <person name="Sanders I.R."/>
            <person name="Stajich J.E."/>
            <person name="Tunlid A."/>
            <person name="Tuskan G."/>
            <person name="Grigoriev I.V."/>
        </authorList>
    </citation>
    <scope>NUCLEOTIDE SEQUENCE [LARGE SCALE GENOMIC DNA]</scope>
    <source>
        <strain>S238N-H82 / ATCC MYA-4686</strain>
    </source>
</reference>
<accession>B0CZ32</accession>
<keyword id="KW-0028">Amino-acid biosynthesis</keyword>
<keyword id="KW-0963">Cytoplasm</keyword>
<keyword id="KW-0456">Lyase</keyword>
<keyword id="KW-0479">Metal-binding</keyword>
<keyword id="KW-0486">Methionine biosynthesis</keyword>
<keyword id="KW-1185">Reference proteome</keyword>
<keyword id="KW-0862">Zinc</keyword>
<comment type="function">
    <text evidence="1">Catalyzes the dehydration of methylthioribulose-1-phosphate (MTRu-1-P) into 2,3-diketo-5-methylthiopentyl-1-phosphate (DK-MTP-1-P).</text>
</comment>
<comment type="catalytic activity">
    <reaction evidence="1">
        <text>5-(methylsulfanyl)-D-ribulose 1-phosphate = 5-methylsulfanyl-2,3-dioxopentyl phosphate + H2O</text>
        <dbReference type="Rhea" id="RHEA:15549"/>
        <dbReference type="ChEBI" id="CHEBI:15377"/>
        <dbReference type="ChEBI" id="CHEBI:58548"/>
        <dbReference type="ChEBI" id="CHEBI:58828"/>
        <dbReference type="EC" id="4.2.1.109"/>
    </reaction>
</comment>
<comment type="cofactor">
    <cofactor evidence="1">
        <name>Zn(2+)</name>
        <dbReference type="ChEBI" id="CHEBI:29105"/>
    </cofactor>
    <text evidence="1">Binds 1 zinc ion per subunit.</text>
</comment>
<comment type="pathway">
    <text evidence="1">Amino-acid biosynthesis; L-methionine biosynthesis via salvage pathway; L-methionine from S-methyl-5-thio-alpha-D-ribose 1-phosphate: step 2/6.</text>
</comment>
<comment type="subcellular location">
    <subcellularLocation>
        <location evidence="1">Cytoplasm</location>
    </subcellularLocation>
</comment>
<comment type="similarity">
    <text evidence="1">Belongs to the aldolase class II family. MtnB subfamily.</text>
</comment>